<gene>
    <name evidence="1" type="primary">ubiA</name>
    <name type="ordered locus">PSHAa2310</name>
</gene>
<keyword id="KW-0997">Cell inner membrane</keyword>
<keyword id="KW-1003">Cell membrane</keyword>
<keyword id="KW-0460">Magnesium</keyword>
<keyword id="KW-0472">Membrane</keyword>
<keyword id="KW-1185">Reference proteome</keyword>
<keyword id="KW-0808">Transferase</keyword>
<keyword id="KW-0812">Transmembrane</keyword>
<keyword id="KW-1133">Transmembrane helix</keyword>
<keyword id="KW-0831">Ubiquinone biosynthesis</keyword>
<accession>Q3IHW5</accession>
<organism>
    <name type="scientific">Pseudoalteromonas translucida (strain TAC 125)</name>
    <dbReference type="NCBI Taxonomy" id="326442"/>
    <lineage>
        <taxon>Bacteria</taxon>
        <taxon>Pseudomonadati</taxon>
        <taxon>Pseudomonadota</taxon>
        <taxon>Gammaproteobacteria</taxon>
        <taxon>Alteromonadales</taxon>
        <taxon>Pseudoalteromonadaceae</taxon>
        <taxon>Pseudoalteromonas</taxon>
    </lineage>
</organism>
<sequence>MKLARLTPSHIPYYIALMRIDKPIGTLLLLWPTYWALWLANAGMPSLTNFIVFTLGVVIMRSAGCVINDFADRKIDGSVKRTMQRPLVSGQVSSGEAISLFILLITVAFLLVLMLSVNTILLSFGALALAFCYPFMKRYTQLPQVVLGAAFGWAIPMAFMASINALPIQAWLLFIANICWTVAYDTMYAMVDRDDDLKIGVKSTAILFGKYDRHIIGLLNLAFIALMLSIGALNNIGLSYWLGLSVAIVLLVYQQVLIQQRARTDCFKAFLNNHYVGLAFFIGLLFSYPVAF</sequence>
<reference key="1">
    <citation type="journal article" date="2005" name="Genome Res.">
        <title>Coping with cold: the genome of the versatile marine Antarctica bacterium Pseudoalteromonas haloplanktis TAC125.</title>
        <authorList>
            <person name="Medigue C."/>
            <person name="Krin E."/>
            <person name="Pascal G."/>
            <person name="Barbe V."/>
            <person name="Bernsel A."/>
            <person name="Bertin P.N."/>
            <person name="Cheung F."/>
            <person name="Cruveiller S."/>
            <person name="D'Amico S."/>
            <person name="Duilio A."/>
            <person name="Fang G."/>
            <person name="Feller G."/>
            <person name="Ho C."/>
            <person name="Mangenot S."/>
            <person name="Marino G."/>
            <person name="Nilsson J."/>
            <person name="Parrilli E."/>
            <person name="Rocha E.P.C."/>
            <person name="Rouy Z."/>
            <person name="Sekowska A."/>
            <person name="Tutino M.L."/>
            <person name="Vallenet D."/>
            <person name="von Heijne G."/>
            <person name="Danchin A."/>
        </authorList>
    </citation>
    <scope>NUCLEOTIDE SEQUENCE [LARGE SCALE GENOMIC DNA]</scope>
    <source>
        <strain>TAC 125</strain>
    </source>
</reference>
<proteinExistence type="inferred from homology"/>
<evidence type="ECO:0000255" key="1">
    <source>
        <dbReference type="HAMAP-Rule" id="MF_01635"/>
    </source>
</evidence>
<name>UBIA_PSET1</name>
<protein>
    <recommendedName>
        <fullName evidence="1">4-hydroxybenzoate octaprenyltransferase</fullName>
        <ecNumber evidence="1">2.5.1.39</ecNumber>
    </recommendedName>
    <alternativeName>
        <fullName evidence="1">4-HB polyprenyltransferase</fullName>
    </alternativeName>
</protein>
<dbReference type="EC" id="2.5.1.39" evidence="1"/>
<dbReference type="EMBL" id="CR954246">
    <property type="protein sequence ID" value="CAI87366.1"/>
    <property type="molecule type" value="Genomic_DNA"/>
</dbReference>
<dbReference type="SMR" id="Q3IHW5"/>
<dbReference type="STRING" id="326442.PSHAa2310"/>
<dbReference type="KEGG" id="pha:PSHAa2310"/>
<dbReference type="PATRIC" id="fig|326442.8.peg.2230"/>
<dbReference type="eggNOG" id="COG0382">
    <property type="taxonomic scope" value="Bacteria"/>
</dbReference>
<dbReference type="HOGENOM" id="CLU_034879_1_0_6"/>
<dbReference type="BioCyc" id="PHAL326442:PSHA_RS11395-MONOMER"/>
<dbReference type="UniPathway" id="UPA00232"/>
<dbReference type="Proteomes" id="UP000006843">
    <property type="component" value="Chromosome I"/>
</dbReference>
<dbReference type="GO" id="GO:0005886">
    <property type="term" value="C:plasma membrane"/>
    <property type="evidence" value="ECO:0007669"/>
    <property type="project" value="UniProtKB-SubCell"/>
</dbReference>
<dbReference type="GO" id="GO:0008412">
    <property type="term" value="F:4-hydroxybenzoate polyprenyltransferase activity"/>
    <property type="evidence" value="ECO:0007669"/>
    <property type="project" value="UniProtKB-UniRule"/>
</dbReference>
<dbReference type="GO" id="GO:0006744">
    <property type="term" value="P:ubiquinone biosynthetic process"/>
    <property type="evidence" value="ECO:0007669"/>
    <property type="project" value="UniProtKB-UniRule"/>
</dbReference>
<dbReference type="CDD" id="cd13959">
    <property type="entry name" value="PT_UbiA_COQ2"/>
    <property type="match status" value="1"/>
</dbReference>
<dbReference type="FunFam" id="1.10.357.140:FF:000002">
    <property type="entry name" value="4-hydroxybenzoate octaprenyltransferase"/>
    <property type="match status" value="1"/>
</dbReference>
<dbReference type="FunFam" id="1.20.120.1780:FF:000001">
    <property type="entry name" value="4-hydroxybenzoate octaprenyltransferase"/>
    <property type="match status" value="1"/>
</dbReference>
<dbReference type="Gene3D" id="1.10.357.140">
    <property type="entry name" value="UbiA prenyltransferase"/>
    <property type="match status" value="1"/>
</dbReference>
<dbReference type="Gene3D" id="1.20.120.1780">
    <property type="entry name" value="UbiA prenyltransferase"/>
    <property type="match status" value="1"/>
</dbReference>
<dbReference type="HAMAP" id="MF_01635">
    <property type="entry name" value="UbiA"/>
    <property type="match status" value="1"/>
</dbReference>
<dbReference type="InterPro" id="IPR006370">
    <property type="entry name" value="HB_polyprenyltransferase-like"/>
</dbReference>
<dbReference type="InterPro" id="IPR039653">
    <property type="entry name" value="Prenyltransferase"/>
</dbReference>
<dbReference type="InterPro" id="IPR000537">
    <property type="entry name" value="UbiA_prenyltransferase"/>
</dbReference>
<dbReference type="InterPro" id="IPR030470">
    <property type="entry name" value="UbiA_prenylTrfase_CS"/>
</dbReference>
<dbReference type="InterPro" id="IPR044878">
    <property type="entry name" value="UbiA_sf"/>
</dbReference>
<dbReference type="NCBIfam" id="TIGR01474">
    <property type="entry name" value="ubiA_proteo"/>
    <property type="match status" value="1"/>
</dbReference>
<dbReference type="PANTHER" id="PTHR11048:SF28">
    <property type="entry name" value="4-HYDROXYBENZOATE POLYPRENYLTRANSFERASE, MITOCHONDRIAL"/>
    <property type="match status" value="1"/>
</dbReference>
<dbReference type="PANTHER" id="PTHR11048">
    <property type="entry name" value="PRENYLTRANSFERASES"/>
    <property type="match status" value="1"/>
</dbReference>
<dbReference type="Pfam" id="PF01040">
    <property type="entry name" value="UbiA"/>
    <property type="match status" value="1"/>
</dbReference>
<dbReference type="PROSITE" id="PS00943">
    <property type="entry name" value="UBIA"/>
    <property type="match status" value="1"/>
</dbReference>
<feature type="chain" id="PRO_0000262818" description="4-hydroxybenzoate octaprenyltransferase">
    <location>
        <begin position="1"/>
        <end position="292"/>
    </location>
</feature>
<feature type="transmembrane region" description="Helical" evidence="1">
    <location>
        <begin position="24"/>
        <end position="44"/>
    </location>
</feature>
<feature type="transmembrane region" description="Helical" evidence="1">
    <location>
        <begin position="47"/>
        <end position="67"/>
    </location>
</feature>
<feature type="transmembrane region" description="Helical" evidence="1">
    <location>
        <begin position="97"/>
        <end position="117"/>
    </location>
</feature>
<feature type="transmembrane region" description="Helical" evidence="1">
    <location>
        <begin position="119"/>
        <end position="139"/>
    </location>
</feature>
<feature type="transmembrane region" description="Helical" evidence="1">
    <location>
        <begin position="145"/>
        <end position="165"/>
    </location>
</feature>
<feature type="transmembrane region" description="Helical" evidence="1">
    <location>
        <begin position="171"/>
        <end position="191"/>
    </location>
</feature>
<feature type="transmembrane region" description="Helical" evidence="1">
    <location>
        <begin position="214"/>
        <end position="234"/>
    </location>
</feature>
<feature type="transmembrane region" description="Helical" evidence="1">
    <location>
        <begin position="238"/>
        <end position="258"/>
    </location>
</feature>
<feature type="transmembrane region" description="Helical" evidence="1">
    <location>
        <begin position="270"/>
        <end position="290"/>
    </location>
</feature>
<comment type="function">
    <text evidence="1">Catalyzes the prenylation of para-hydroxybenzoate (PHB) with an all-trans polyprenyl group. Mediates the second step in the final reaction sequence of ubiquinone-8 (UQ-8) biosynthesis, which is the condensation of the polyisoprenoid side chain with PHB, generating the first membrane-bound Q intermediate 3-octaprenyl-4-hydroxybenzoate.</text>
</comment>
<comment type="catalytic activity">
    <reaction evidence="1">
        <text>all-trans-octaprenyl diphosphate + 4-hydroxybenzoate = 4-hydroxy-3-(all-trans-octaprenyl)benzoate + diphosphate</text>
        <dbReference type="Rhea" id="RHEA:27782"/>
        <dbReference type="ChEBI" id="CHEBI:1617"/>
        <dbReference type="ChEBI" id="CHEBI:17879"/>
        <dbReference type="ChEBI" id="CHEBI:33019"/>
        <dbReference type="ChEBI" id="CHEBI:57711"/>
        <dbReference type="EC" id="2.5.1.39"/>
    </reaction>
</comment>
<comment type="cofactor">
    <cofactor evidence="1">
        <name>Mg(2+)</name>
        <dbReference type="ChEBI" id="CHEBI:18420"/>
    </cofactor>
</comment>
<comment type="pathway">
    <text evidence="1">Cofactor biosynthesis; ubiquinone biosynthesis.</text>
</comment>
<comment type="subcellular location">
    <subcellularLocation>
        <location evidence="1">Cell inner membrane</location>
        <topology evidence="1">Multi-pass membrane protein</topology>
    </subcellularLocation>
</comment>
<comment type="similarity">
    <text evidence="1">Belongs to the UbiA prenyltransferase family.</text>
</comment>